<evidence type="ECO:0000250" key="1"/>
<evidence type="ECO:0000250" key="2">
    <source>
        <dbReference type="UniProtKB" id="P06730"/>
    </source>
</evidence>
<evidence type="ECO:0000256" key="3">
    <source>
        <dbReference type="SAM" id="MobiDB-lite"/>
    </source>
</evidence>
<evidence type="ECO:0000269" key="4">
    <source>
    </source>
</evidence>
<evidence type="ECO:0000269" key="5">
    <source>
    </source>
</evidence>
<evidence type="ECO:0000269" key="6">
    <source>
    </source>
</evidence>
<evidence type="ECO:0000269" key="7">
    <source>
    </source>
</evidence>
<evidence type="ECO:0000269" key="8">
    <source>
    </source>
</evidence>
<evidence type="ECO:0000269" key="9">
    <source>
    </source>
</evidence>
<evidence type="ECO:0000269" key="10">
    <source>
    </source>
</evidence>
<evidence type="ECO:0000269" key="11">
    <source>
    </source>
</evidence>
<evidence type="ECO:0000269" key="12">
    <source>
    </source>
</evidence>
<evidence type="ECO:0000269" key="13">
    <source>
    </source>
</evidence>
<evidence type="ECO:0000269" key="14">
    <source>
    </source>
</evidence>
<evidence type="ECO:0000269" key="15">
    <source>
    </source>
</evidence>
<evidence type="ECO:0000269" key="16">
    <source>
    </source>
</evidence>
<evidence type="ECO:0000269" key="17">
    <source>
    </source>
</evidence>
<evidence type="ECO:0000269" key="18">
    <source>
    </source>
</evidence>
<evidence type="ECO:0000269" key="19">
    <source>
    </source>
</evidence>
<evidence type="ECO:0000303" key="20">
    <source>
    </source>
</evidence>
<evidence type="ECO:0000303" key="21">
    <source>
    </source>
</evidence>
<evidence type="ECO:0000303" key="22">
    <source>
    </source>
</evidence>
<evidence type="ECO:0000303" key="23">
    <source ref="7"/>
</evidence>
<evidence type="ECO:0000305" key="24"/>
<evidence type="ECO:0000312" key="25">
    <source>
        <dbReference type="FlyBase" id="FBgn0015218"/>
    </source>
</evidence>
<evidence type="ECO:0007744" key="26">
    <source>
        <dbReference type="PDB" id="4AXG"/>
    </source>
</evidence>
<evidence type="ECO:0007744" key="27">
    <source>
        <dbReference type="PDB" id="4UE8"/>
    </source>
</evidence>
<evidence type="ECO:0007744" key="28">
    <source>
        <dbReference type="PDB" id="4UE9"/>
    </source>
</evidence>
<evidence type="ECO:0007744" key="29">
    <source>
        <dbReference type="PDB" id="4UEA"/>
    </source>
</evidence>
<evidence type="ECO:0007744" key="30">
    <source>
        <dbReference type="PDB" id="4UEB"/>
    </source>
</evidence>
<evidence type="ECO:0007744" key="31">
    <source>
        <dbReference type="PDB" id="4UEC"/>
    </source>
</evidence>
<evidence type="ECO:0007829" key="32">
    <source>
        <dbReference type="PDB" id="4UE8"/>
    </source>
</evidence>
<evidence type="ECO:0007829" key="33">
    <source>
        <dbReference type="PDB" id="4UEB"/>
    </source>
</evidence>
<evidence type="ECO:0007829" key="34">
    <source>
        <dbReference type="PDB" id="5ABV"/>
    </source>
</evidence>
<proteinExistence type="evidence at protein level"/>
<accession>P48598</accession>
<accession>A4V1Q6</accession>
<accession>Q95SV3</accession>
<accession>Q9VSX8</accession>
<accession>Q9VSX9</accession>
<protein>
    <recommendedName>
        <fullName>Eukaryotic translation initiation factor 4E1</fullName>
    </recommendedName>
    <alternativeName>
        <fullName>eIF-4F 25 kDa subunit</fullName>
    </alternativeName>
    <alternativeName>
        <fullName evidence="22">mRNA cap-binding protein</fullName>
    </alternativeName>
</protein>
<dbReference type="EMBL" id="U16139">
    <property type="protein sequence ID" value="AAC46603.1"/>
    <property type="molecule type" value="mRNA"/>
</dbReference>
<dbReference type="EMBL" id="U54469">
    <property type="protein sequence ID" value="AAC03525.1"/>
    <property type="molecule type" value="Genomic_DNA"/>
</dbReference>
<dbReference type="EMBL" id="U54469">
    <property type="protein sequence ID" value="AAC03524.1"/>
    <property type="molecule type" value="Genomic_DNA"/>
</dbReference>
<dbReference type="EMBL" id="U63033">
    <property type="protein sequence ID" value="AAC47480.1"/>
    <property type="molecule type" value="Genomic_DNA"/>
</dbReference>
<dbReference type="EMBL" id="U63033">
    <property type="protein sequence ID" value="AAC47479.1"/>
    <property type="molecule type" value="Genomic_DNA"/>
</dbReference>
<dbReference type="EMBL" id="AE014296">
    <property type="protein sequence ID" value="AAF50281.1"/>
    <property type="molecule type" value="Genomic_DNA"/>
</dbReference>
<dbReference type="EMBL" id="AE014296">
    <property type="protein sequence ID" value="AAF50282.1"/>
    <property type="molecule type" value="Genomic_DNA"/>
</dbReference>
<dbReference type="EMBL" id="AE014296">
    <property type="protein sequence ID" value="AAF50283.1"/>
    <property type="molecule type" value="Genomic_DNA"/>
</dbReference>
<dbReference type="EMBL" id="AE014296">
    <property type="protein sequence ID" value="AAN11963.1"/>
    <property type="molecule type" value="Genomic_DNA"/>
</dbReference>
<dbReference type="EMBL" id="AE014296">
    <property type="protein sequence ID" value="AAN11964.1"/>
    <property type="molecule type" value="Genomic_DNA"/>
</dbReference>
<dbReference type="EMBL" id="AE014296">
    <property type="protein sequence ID" value="AAN11965.1"/>
    <property type="molecule type" value="Genomic_DNA"/>
</dbReference>
<dbReference type="EMBL" id="AE014296">
    <property type="protein sequence ID" value="AAN11966.1"/>
    <property type="molecule type" value="Genomic_DNA"/>
</dbReference>
<dbReference type="EMBL" id="AY060470">
    <property type="protein sequence ID" value="AAL25509.1"/>
    <property type="status" value="ALT_FRAME"/>
    <property type="molecule type" value="mRNA"/>
</dbReference>
<dbReference type="EMBL" id="BT012467">
    <property type="protein sequence ID" value="AAS93738.1"/>
    <property type="molecule type" value="mRNA"/>
</dbReference>
<dbReference type="EMBL" id="BT044219">
    <property type="protein sequence ID" value="ACH92284.1"/>
    <property type="molecule type" value="mRNA"/>
</dbReference>
<dbReference type="PIR" id="S55936">
    <property type="entry name" value="S55936"/>
</dbReference>
<dbReference type="RefSeq" id="NP_001261626.1">
    <molecule id="P48598-1"/>
    <property type="nucleotide sequence ID" value="NM_001274697.1"/>
</dbReference>
<dbReference type="RefSeq" id="NP_001261627.1">
    <molecule id="P48598-1"/>
    <property type="nucleotide sequence ID" value="NM_001274698.1"/>
</dbReference>
<dbReference type="RefSeq" id="NP_524829.1">
    <molecule id="P48598-1"/>
    <property type="nucleotide sequence ID" value="NM_080090.3"/>
</dbReference>
<dbReference type="RefSeq" id="NP_729480.1">
    <molecule id="P48598-2"/>
    <property type="nucleotide sequence ID" value="NM_168333.2"/>
</dbReference>
<dbReference type="RefSeq" id="NP_729481.1">
    <molecule id="P48598-1"/>
    <property type="nucleotide sequence ID" value="NM_168334.1"/>
</dbReference>
<dbReference type="RefSeq" id="NP_729482.1">
    <molecule id="P48598-1"/>
    <property type="nucleotide sequence ID" value="NM_168335.2"/>
</dbReference>
<dbReference type="RefSeq" id="NP_729483.1">
    <molecule id="P48598-1"/>
    <property type="nucleotide sequence ID" value="NM_168336.2"/>
</dbReference>
<dbReference type="RefSeq" id="NP_729484.1">
    <molecule id="P48598-1"/>
    <property type="nucleotide sequence ID" value="NM_168337.2"/>
</dbReference>
<dbReference type="RefSeq" id="NP_729485.1">
    <molecule id="P48598-1"/>
    <property type="nucleotide sequence ID" value="NM_168338.2"/>
</dbReference>
<dbReference type="PDB" id="4AXG">
    <property type="method" value="X-ray"/>
    <property type="resolution" value="2.80 A"/>
    <property type="chains" value="A/B=19-259"/>
</dbReference>
<dbReference type="PDB" id="4UE8">
    <property type="method" value="X-ray"/>
    <property type="resolution" value="1.10 A"/>
    <property type="chains" value="A=80-259"/>
</dbReference>
<dbReference type="PDB" id="4UE9">
    <property type="method" value="X-ray"/>
    <property type="resolution" value="2.15 A"/>
    <property type="chains" value="A=80-259"/>
</dbReference>
<dbReference type="PDB" id="4UEA">
    <property type="method" value="X-ray"/>
    <property type="resolution" value="2.62 A"/>
    <property type="chains" value="A/C/E=80-259"/>
</dbReference>
<dbReference type="PDB" id="4UEB">
    <property type="method" value="X-ray"/>
    <property type="resolution" value="2.52 A"/>
    <property type="chains" value="A/C/E=80-259"/>
</dbReference>
<dbReference type="PDB" id="4UEC">
    <property type="method" value="X-ray"/>
    <property type="resolution" value="2.40 A"/>
    <property type="chains" value="A/C=80-259"/>
</dbReference>
<dbReference type="PDB" id="5ABU">
    <property type="method" value="X-ray"/>
    <property type="resolution" value="2.16 A"/>
    <property type="chains" value="A=80-259"/>
</dbReference>
<dbReference type="PDB" id="5ABV">
    <property type="method" value="X-ray"/>
    <property type="resolution" value="2.13 A"/>
    <property type="chains" value="A/C/E/G=80-259"/>
</dbReference>
<dbReference type="PDB" id="5T47">
    <property type="method" value="X-ray"/>
    <property type="resolution" value="2.20 A"/>
    <property type="chains" value="A/C=80-259"/>
</dbReference>
<dbReference type="PDB" id="5T48">
    <property type="method" value="X-ray"/>
    <property type="resolution" value="2.19 A"/>
    <property type="chains" value="A=80-259"/>
</dbReference>
<dbReference type="PDBsum" id="4AXG"/>
<dbReference type="PDBsum" id="4UE8"/>
<dbReference type="PDBsum" id="4UE9"/>
<dbReference type="PDBsum" id="4UEA"/>
<dbReference type="PDBsum" id="4UEB"/>
<dbReference type="PDBsum" id="4UEC"/>
<dbReference type="PDBsum" id="5ABU"/>
<dbReference type="PDBsum" id="5ABV"/>
<dbReference type="PDBsum" id="5T47"/>
<dbReference type="PDBsum" id="5T48"/>
<dbReference type="SMR" id="P48598"/>
<dbReference type="BioGRID" id="69740">
    <property type="interactions" value="54"/>
</dbReference>
<dbReference type="ComplexPortal" id="CPX-3177">
    <property type="entry name" value="eIF4E-cup complex"/>
</dbReference>
<dbReference type="DIP" id="DIP-17448N"/>
<dbReference type="ELM" id="P48598"/>
<dbReference type="FunCoup" id="P48598">
    <property type="interactions" value="1807"/>
</dbReference>
<dbReference type="IntAct" id="P48598">
    <property type="interactions" value="26"/>
</dbReference>
<dbReference type="STRING" id="7227.FBpp0306017"/>
<dbReference type="GlyGen" id="P48598">
    <property type="glycosylation" value="1 site"/>
</dbReference>
<dbReference type="iPTMnet" id="P48598"/>
<dbReference type="PaxDb" id="7227-FBpp0076215"/>
<dbReference type="DNASU" id="45525"/>
<dbReference type="EnsemblMetazoa" id="FBtr0076487">
    <molecule id="P48598-1"/>
    <property type="protein sequence ID" value="FBpp0076215"/>
    <property type="gene ID" value="FBgn0015218"/>
</dbReference>
<dbReference type="EnsemblMetazoa" id="FBtr0076488">
    <molecule id="P48598-2"/>
    <property type="protein sequence ID" value="FBpp0076216"/>
    <property type="gene ID" value="FBgn0015218"/>
</dbReference>
<dbReference type="EnsemblMetazoa" id="FBtr0076489">
    <molecule id="P48598-1"/>
    <property type="protein sequence ID" value="FBpp0076217"/>
    <property type="gene ID" value="FBgn0015218"/>
</dbReference>
<dbReference type="EnsemblMetazoa" id="FBtr0076490">
    <molecule id="P48598-1"/>
    <property type="protein sequence ID" value="FBpp0076218"/>
    <property type="gene ID" value="FBgn0015218"/>
</dbReference>
<dbReference type="EnsemblMetazoa" id="FBtr0076491">
    <molecule id="P48598-1"/>
    <property type="protein sequence ID" value="FBpp0076219"/>
    <property type="gene ID" value="FBgn0015218"/>
</dbReference>
<dbReference type="EnsemblMetazoa" id="FBtr0076492">
    <molecule id="P48598-1"/>
    <property type="protein sequence ID" value="FBpp0076220"/>
    <property type="gene ID" value="FBgn0015218"/>
</dbReference>
<dbReference type="EnsemblMetazoa" id="FBtr0076493">
    <molecule id="P48598-1"/>
    <property type="protein sequence ID" value="FBpp0076221"/>
    <property type="gene ID" value="FBgn0015218"/>
</dbReference>
<dbReference type="EnsemblMetazoa" id="FBtr0333884">
    <molecule id="P48598-1"/>
    <property type="protein sequence ID" value="FBpp0306016"/>
    <property type="gene ID" value="FBgn0015218"/>
</dbReference>
<dbReference type="EnsemblMetazoa" id="FBtr0333885">
    <molecule id="P48598-1"/>
    <property type="protein sequence ID" value="FBpp0306017"/>
    <property type="gene ID" value="FBgn0015218"/>
</dbReference>
<dbReference type="GeneID" id="45525"/>
<dbReference type="KEGG" id="dme:Dmel_CG4035"/>
<dbReference type="UCSC" id="CG4035-RB">
    <property type="organism name" value="d. melanogaster"/>
</dbReference>
<dbReference type="AGR" id="FB:FBgn0015218"/>
<dbReference type="CTD" id="45525"/>
<dbReference type="FlyBase" id="FBgn0015218">
    <property type="gene designation" value="eIF4E1"/>
</dbReference>
<dbReference type="VEuPathDB" id="VectorBase:FBgn0015218"/>
<dbReference type="eggNOG" id="KOG1670">
    <property type="taxonomic scope" value="Eukaryota"/>
</dbReference>
<dbReference type="GeneTree" id="ENSGT00940000167792"/>
<dbReference type="InParanoid" id="P48598"/>
<dbReference type="OMA" id="EEFWAIV"/>
<dbReference type="OrthoDB" id="590761at2759"/>
<dbReference type="PhylomeDB" id="P48598"/>
<dbReference type="Reactome" id="R-DME-110523">
    <property type="pathway name" value="TOR signaling pathway"/>
</dbReference>
<dbReference type="Reactome" id="R-DME-1169408">
    <property type="pathway name" value="ISG15 antiviral mechanism"/>
</dbReference>
<dbReference type="Reactome" id="R-DME-156827">
    <property type="pathway name" value="L13a-mediated translational silencing of Ceruloplasmin expression"/>
</dbReference>
<dbReference type="Reactome" id="R-DME-159227">
    <property type="pathway name" value="Transport of the SLBP independent Mature mRNA"/>
</dbReference>
<dbReference type="Reactome" id="R-DME-159230">
    <property type="pathway name" value="Transport of the SLBP Dependant Mature mRNA"/>
</dbReference>
<dbReference type="Reactome" id="R-DME-159231">
    <property type="pathway name" value="Transport of Mature mRNA Derived from an Intronless Transcript"/>
</dbReference>
<dbReference type="Reactome" id="R-DME-166208">
    <property type="pathway name" value="mTORC1-mediated signalling"/>
</dbReference>
<dbReference type="Reactome" id="R-DME-72649">
    <property type="pathway name" value="Translation initiation complex formation"/>
</dbReference>
<dbReference type="Reactome" id="R-DME-72662">
    <property type="pathway name" value="Activation of the mRNA upon binding of the cap-binding complex and eIFs, and subsequent binding to 43S"/>
</dbReference>
<dbReference type="Reactome" id="R-DME-72702">
    <property type="pathway name" value="Ribosomal scanning and start codon recognition"/>
</dbReference>
<dbReference type="SignaLink" id="P48598"/>
<dbReference type="BioGRID-ORCS" id="45525">
    <property type="hits" value="1 hit in 3 CRISPR screens"/>
</dbReference>
<dbReference type="ChiTaRS" id="eIF-4E">
    <property type="organism name" value="fly"/>
</dbReference>
<dbReference type="EvolutionaryTrace" id="P48598"/>
<dbReference type="GenomeRNAi" id="45525"/>
<dbReference type="PRO" id="PR:P48598"/>
<dbReference type="Proteomes" id="UP000000803">
    <property type="component" value="Chromosome 3L"/>
</dbReference>
<dbReference type="Bgee" id="FBgn0015218">
    <property type="expression patterns" value="Expressed in egg chamber and 287 other cell types or tissues"/>
</dbReference>
<dbReference type="ExpressionAtlas" id="P48598">
    <property type="expression patterns" value="baseline and differential"/>
</dbReference>
<dbReference type="GO" id="GO:0005737">
    <property type="term" value="C:cytoplasm"/>
    <property type="evidence" value="ECO:0000314"/>
    <property type="project" value="UniProtKB"/>
</dbReference>
<dbReference type="GO" id="GO:0005829">
    <property type="term" value="C:cytosol"/>
    <property type="evidence" value="ECO:0000314"/>
    <property type="project" value="FlyBase"/>
</dbReference>
<dbReference type="GO" id="GO:0016281">
    <property type="term" value="C:eukaryotic translation initiation factor 4F complex"/>
    <property type="evidence" value="ECO:0000314"/>
    <property type="project" value="FlyBase"/>
</dbReference>
<dbReference type="GO" id="GO:0097482">
    <property type="term" value="C:muscle cell postsynaptic specialization"/>
    <property type="evidence" value="ECO:0000314"/>
    <property type="project" value="FlyBase"/>
</dbReference>
<dbReference type="GO" id="GO:0031594">
    <property type="term" value="C:neuromuscular junction"/>
    <property type="evidence" value="ECO:0000314"/>
    <property type="project" value="FlyBase"/>
</dbReference>
<dbReference type="GO" id="GO:0071598">
    <property type="term" value="C:neuronal ribonucleoprotein granule"/>
    <property type="evidence" value="ECO:0000314"/>
    <property type="project" value="UniProtKB"/>
</dbReference>
<dbReference type="GO" id="GO:0016604">
    <property type="term" value="C:nuclear body"/>
    <property type="evidence" value="ECO:0000314"/>
    <property type="project" value="UniProtKB"/>
</dbReference>
<dbReference type="GO" id="GO:0000932">
    <property type="term" value="C:P-body"/>
    <property type="evidence" value="ECO:0000314"/>
    <property type="project" value="FlyBase"/>
</dbReference>
<dbReference type="GO" id="GO:0031370">
    <property type="term" value="F:eukaryotic initiation factor 4G binding"/>
    <property type="evidence" value="ECO:0000353"/>
    <property type="project" value="FlyBase"/>
</dbReference>
<dbReference type="GO" id="GO:0000340">
    <property type="term" value="F:RNA 7-methylguanosine cap binding"/>
    <property type="evidence" value="ECO:0000314"/>
    <property type="project" value="FlyBase"/>
</dbReference>
<dbReference type="GO" id="GO:0000339">
    <property type="term" value="F:RNA cap binding"/>
    <property type="evidence" value="ECO:0000314"/>
    <property type="project" value="UniProtKB"/>
</dbReference>
<dbReference type="GO" id="GO:0003743">
    <property type="term" value="F:translation initiation factor activity"/>
    <property type="evidence" value="ECO:0000314"/>
    <property type="project" value="UniProtKB"/>
</dbReference>
<dbReference type="GO" id="GO:0006417">
    <property type="term" value="P:regulation of translation"/>
    <property type="evidence" value="ECO:0007669"/>
    <property type="project" value="UniProtKB-KW"/>
</dbReference>
<dbReference type="GO" id="GO:0016070">
    <property type="term" value="P:RNA metabolic process"/>
    <property type="evidence" value="ECO:0000314"/>
    <property type="project" value="UniProtKB"/>
</dbReference>
<dbReference type="GO" id="GO:0006412">
    <property type="term" value="P:translation"/>
    <property type="evidence" value="ECO:0000314"/>
    <property type="project" value="FlyBase"/>
</dbReference>
<dbReference type="GO" id="GO:0006413">
    <property type="term" value="P:translational initiation"/>
    <property type="evidence" value="ECO:0000314"/>
    <property type="project" value="UniProtKB"/>
</dbReference>
<dbReference type="DisProt" id="DP02400"/>
<dbReference type="FunFam" id="3.30.760.10:FF:000010">
    <property type="entry name" value="Eukaryotic translation initiation factor 4E1"/>
    <property type="match status" value="1"/>
</dbReference>
<dbReference type="Gene3D" id="3.30.760.10">
    <property type="entry name" value="RNA Cap, Translation Initiation Factor Eif4e"/>
    <property type="match status" value="1"/>
</dbReference>
<dbReference type="IDEAL" id="IID50283"/>
<dbReference type="InterPro" id="IPR023398">
    <property type="entry name" value="TIF_eIF4e-like"/>
</dbReference>
<dbReference type="InterPro" id="IPR001040">
    <property type="entry name" value="TIF_eIF_4E"/>
</dbReference>
<dbReference type="InterPro" id="IPR019770">
    <property type="entry name" value="TIF_eIF_4E_CS"/>
</dbReference>
<dbReference type="PANTHER" id="PTHR11960">
    <property type="entry name" value="EUKARYOTIC TRANSLATION INITIATION FACTOR 4E RELATED"/>
    <property type="match status" value="1"/>
</dbReference>
<dbReference type="PANTHER" id="PTHR11960:SF8">
    <property type="entry name" value="EUKARYOTIC TRANSLATION INITIATION FACTOR 4E1-RELATED"/>
    <property type="match status" value="1"/>
</dbReference>
<dbReference type="Pfam" id="PF01652">
    <property type="entry name" value="IF4E"/>
    <property type="match status" value="1"/>
</dbReference>
<dbReference type="SUPFAM" id="SSF55418">
    <property type="entry name" value="eIF4e-like"/>
    <property type="match status" value="1"/>
</dbReference>
<dbReference type="PROSITE" id="PS00813">
    <property type="entry name" value="IF4E"/>
    <property type="match status" value="1"/>
</dbReference>
<organism>
    <name type="scientific">Drosophila melanogaster</name>
    <name type="common">Fruit fly</name>
    <dbReference type="NCBI Taxonomy" id="7227"/>
    <lineage>
        <taxon>Eukaryota</taxon>
        <taxon>Metazoa</taxon>
        <taxon>Ecdysozoa</taxon>
        <taxon>Arthropoda</taxon>
        <taxon>Hexapoda</taxon>
        <taxon>Insecta</taxon>
        <taxon>Pterygota</taxon>
        <taxon>Neoptera</taxon>
        <taxon>Endopterygota</taxon>
        <taxon>Diptera</taxon>
        <taxon>Brachycera</taxon>
        <taxon>Muscomorpha</taxon>
        <taxon>Ephydroidea</taxon>
        <taxon>Drosophilidae</taxon>
        <taxon>Drosophila</taxon>
        <taxon>Sophophora</taxon>
    </lineage>
</organism>
<keyword id="KW-0002">3D-structure</keyword>
<keyword id="KW-0025">Alternative splicing</keyword>
<keyword id="KW-0963">Cytoplasm</keyword>
<keyword id="KW-0396">Initiation factor</keyword>
<keyword id="KW-0539">Nucleus</keyword>
<keyword id="KW-0597">Phosphoprotein</keyword>
<keyword id="KW-0648">Protein biosynthesis</keyword>
<keyword id="KW-1185">Reference proteome</keyword>
<keyword id="KW-0694">RNA-binding</keyword>
<keyword id="KW-0810">Translation regulation</keyword>
<sequence length="259" mass="29224">MQSDFHRMKNFANPKSMFKTSAPSTEQGRPEPPTSAAAPAEAKDVKPKEDPQETGEPAGNTATTTAPAGDDAVRTEHLYKHPLMNVWTLWYLENDRSKSWEDMQNEITSFDTVEDFWSLYNHIKPPSEIKLGSDYSLFKKNIRPMWEDAANKQGGRWVITLNKSSKTDLDNLWLDVLLCLIGEAFDHSDQICGAVINIRGKSNKISIWTADGNNEEAALEIGHKLRDALRLGRNNSLQYQLHKDTMVKQGSNVKSIYTL</sequence>
<gene>
    <name evidence="25" type="primary">eIF4E1</name>
    <name evidence="21" type="synonym">eIF-4E</name>
    <name evidence="20" type="synonym">Eif4e</name>
    <name evidence="25" type="ORF">CG4035</name>
</gene>
<comment type="function">
    <text evidence="16 18">Recognizes and binds the 7-methylguanosine (m7G)-containing mRNA cap during an early step in the initiation of protein synthesis and facilitates ribosome binding by inducing the unwinding of the mRNAs secondary structures (PubMed:8663200). In 0-1 hour embryos, forms a complex with me31B, cup, tral and pAbp which binds to various mRNAs including maternal mRNAs, and down-regulates their expression during the maternal-to-zygotic transition (PubMed:28875934).</text>
</comment>
<comment type="subunit">
    <text evidence="4 6 7 8 9 12 13 14 15 16">eIF4F is a multi-subunit complex, the composition of which varies with external and internal environmental conditions. It is composed of at least eIF4A, eIF4E1 and eIF4G1 (PubMed:25702871). Recruited by cup in oocytes and in early embryos, preventing the interaction with eIF4G (PubMed:14685270, PubMed:14691132, PubMed:14723848, PubMed:22832024, PubMed:26294658). The interaction with cup therefore prevents the translation of key transcripts such as oskar (osk) and nanos (nos) in some regions in the early embryo (PubMed:14685270, PubMed:14691132, PubMed:14723848, PubMed:22832024, PubMed:26294658). Interacts with mxt (PubMed:23716590, PubMed:26294658). Interacts with 4E-T and Thor (PubMed:11389445, PubMed:14645523, PubMed:25702871, PubMed:26294658). Forms a RNP containing at least me31B, eIF4E1, cup, tral and pAbp; this interaction is required for the translational silencing of maternal mRNAs during the maternal-to-zygotic transition (PubMed:28875934).</text>
</comment>
<comment type="interaction">
    <interactant intactId="EBI-198574">
        <id>P48598</id>
    </interactant>
    <interactant intactId="EBI-95398">
        <id>Q9VMA3</id>
        <label>cup</label>
    </interactant>
    <organismsDiffer>false</organismsDiffer>
    <experiments>6</experiments>
</comment>
<comment type="interaction">
    <interactant intactId="EBI-198574">
        <id>P48598</id>
    </interactant>
    <interactant intactId="EBI-182219">
        <id>O61380</id>
        <label>eIF4G1</label>
    </interactant>
    <organismsDiffer>false</organismsDiffer>
    <experiments>4</experiments>
</comment>
<comment type="interaction">
    <interactant intactId="EBI-198574">
        <id>P48598</id>
    </interactant>
    <interactant intactId="EBI-300281">
        <id>P23128</id>
        <label>me31B</label>
    </interactant>
    <organismsDiffer>false</organismsDiffer>
    <experiments>6</experiments>
</comment>
<comment type="interaction">
    <interactant intactId="EBI-198574">
        <id>P48598</id>
    </interactant>
    <interactant intactId="EBI-103658">
        <id>P21187</id>
        <label>pAbp</label>
    </interactant>
    <organismsDiffer>false</organismsDiffer>
    <experiments>2</experiments>
</comment>
<comment type="interaction">
    <interactant intactId="EBI-198574">
        <id>P48598</id>
    </interactant>
    <interactant intactId="EBI-112695">
        <id>Q9XZ56</id>
        <label>Thor</label>
    </interactant>
    <organismsDiffer>false</organismsDiffer>
    <experiments>5</experiments>
</comment>
<comment type="interaction">
    <interactant intactId="EBI-15128446">
        <id>P48598-2</id>
    </interactant>
    <interactant intactId="EBI-15128468">
        <id>Q9VY20</id>
        <label>Dmel\CG5347</label>
    </interactant>
    <organismsDiffer>false</organismsDiffer>
    <experiments>4</experiments>
</comment>
<comment type="subcellular location">
    <subcellularLocation>
        <location evidence="10">Cytoplasm</location>
        <location evidence="10">Cytoplasmic ribonucleoprotein granule</location>
    </subcellularLocation>
    <subcellularLocation>
        <location evidence="5">Cytoplasm</location>
    </subcellularLocation>
    <subcellularLocation>
        <location evidence="5">Nucleus</location>
        <location evidence="5">Nuclear body</location>
    </subcellularLocation>
</comment>
<comment type="alternative products">
    <event type="alternative splicing"/>
    <isoform>
        <id>P48598-1</id>
        <name evidence="22">I</name>
        <name>A</name>
        <name>B</name>
        <name>D</name>
        <name>E</name>
        <name>F</name>
        <name>G</name>
        <sequence type="displayed"/>
    </isoform>
    <isoform>
        <id>P48598-2</id>
        <name evidence="22">II</name>
        <name>C</name>
        <sequence type="described" ref="VSP_001437"/>
    </isoform>
</comment>
<comment type="tissue specificity">
    <text evidence="11 19">Expressed at the posterior end of developing oocytes (at protein level) (PubMed:20869429). Preferential expression in the pole cells, at different developmental stages (PubMed:9065696).</text>
</comment>
<comment type="developmental stage">
    <text evidence="16 17 19">High levels of expression in early embryos, with levels decreasing slightly over the first 5 hours of embryogenesis (at protein level) (PubMed:28875934). Throughout development (PubMed:7742371, PubMed:9065696).</text>
</comment>
<comment type="PTM">
    <text evidence="1">Phosphorylation increases the ability of the protein to bind to mRNA caps and to form the eIF4F complex.</text>
</comment>
<comment type="similarity">
    <text evidence="24">Belongs to the eukaryotic initiation factor 4E family.</text>
</comment>
<comment type="sequence caution" evidence="24">
    <conflict type="frameshift">
        <sequence resource="EMBL-CDS" id="AAL25509"/>
    </conflict>
</comment>
<feature type="chain" id="PRO_0000193642" description="Eukaryotic translation initiation factor 4E1">
    <location>
        <begin position="1"/>
        <end position="259"/>
    </location>
</feature>
<feature type="region of interest" description="Disordered" evidence="3">
    <location>
        <begin position="1"/>
        <end position="70"/>
    </location>
</feature>
<feature type="compositionally biased region" description="Polar residues" evidence="3">
    <location>
        <begin position="18"/>
        <end position="27"/>
    </location>
</feature>
<feature type="compositionally biased region" description="Basic and acidic residues" evidence="3">
    <location>
        <begin position="41"/>
        <end position="51"/>
    </location>
</feature>
<feature type="compositionally biased region" description="Low complexity" evidence="3">
    <location>
        <begin position="54"/>
        <end position="70"/>
    </location>
</feature>
<feature type="binding site" evidence="2">
    <location>
        <begin position="100"/>
        <end position="101"/>
    </location>
    <ligand>
        <name>mRNA</name>
        <dbReference type="ChEBI" id="CHEBI:33699"/>
    </ligand>
    <ligandPart>
        <name>N(7)-methylguanosine 5'-triphosphate group</name>
        <dbReference type="ChEBI" id="CHEBI:74429"/>
        <note>m7GTP residue in mRNA cap</note>
    </ligandPart>
</feature>
<feature type="binding site" evidence="2">
    <location>
        <begin position="146"/>
        <end position="147"/>
    </location>
    <ligand>
        <name>mRNA</name>
        <dbReference type="ChEBI" id="CHEBI:33699"/>
    </ligand>
    <ligandPart>
        <name>N(7)-methylguanosine 5'-triphosphate group</name>
        <dbReference type="ChEBI" id="CHEBI:74429"/>
        <note>m7GTP residue in mRNA cap</note>
    </ligandPart>
</feature>
<feature type="binding site" evidence="2">
    <location>
        <begin position="199"/>
        <end position="204"/>
    </location>
    <ligand>
        <name>mRNA</name>
        <dbReference type="ChEBI" id="CHEBI:33699"/>
    </ligand>
    <ligandPart>
        <name>N(7)-methylguanosine 5'-triphosphate group</name>
        <dbReference type="ChEBI" id="CHEBI:74429"/>
        <note>m7GTP residue in mRNA cap</note>
    </ligandPart>
</feature>
<feature type="splice variant" id="VSP_001437" description="In isoform II." evidence="23">
    <original>MQSDFHRMKNFANPKSMF</original>
    <variation>MVVLETE</variation>
    <location>
        <begin position="1"/>
        <end position="18"/>
    </location>
</feature>
<feature type="mutagenesis site" description="Abolishes interaction with cup and mxt; when associated with A-123." evidence="15">
    <original>I</original>
    <variation>A</variation>
    <location>
        <position position="107"/>
    </location>
</feature>
<feature type="mutagenesis site" description="Disrupts interaction with cup, eIF4G and mxt." evidence="9 15">
    <original>W</original>
    <variation>A</variation>
    <location>
        <position position="117"/>
    </location>
</feature>
<feature type="mutagenesis site" description="Abolishes interaction with mxt, reduces binding to Thor and 4E-T, and does not affect interaction with cup." evidence="15">
    <original>NH</original>
    <variation>EE</variation>
    <location>
        <begin position="121"/>
        <end position="122"/>
    </location>
</feature>
<feature type="mutagenesis site" description="Abolishes interaction with cup and mxt; when associated with A-107." evidence="15">
    <original>I</original>
    <variation>A</variation>
    <location>
        <position position="123"/>
    </location>
</feature>
<feature type="strand" evidence="32">
    <location>
        <begin position="82"/>
        <end position="92"/>
    </location>
</feature>
<feature type="helix" evidence="34">
    <location>
        <begin position="100"/>
        <end position="102"/>
    </location>
</feature>
<feature type="strand" evidence="32">
    <location>
        <begin position="105"/>
        <end position="112"/>
    </location>
</feature>
<feature type="helix" evidence="32">
    <location>
        <begin position="113"/>
        <end position="122"/>
    </location>
</feature>
<feature type="helix" evidence="32">
    <location>
        <begin position="126"/>
        <end position="128"/>
    </location>
</feature>
<feature type="strand" evidence="32">
    <location>
        <begin position="134"/>
        <end position="139"/>
    </location>
</feature>
<feature type="strand" evidence="33">
    <location>
        <begin position="144"/>
        <end position="148"/>
    </location>
</feature>
<feature type="turn" evidence="32">
    <location>
        <begin position="149"/>
        <end position="153"/>
    </location>
</feature>
<feature type="strand" evidence="32">
    <location>
        <begin position="155"/>
        <end position="163"/>
    </location>
</feature>
<feature type="helix" evidence="32">
    <location>
        <begin position="166"/>
        <end position="181"/>
    </location>
</feature>
<feature type="helix" evidence="32">
    <location>
        <begin position="188"/>
        <end position="190"/>
    </location>
</feature>
<feature type="strand" evidence="32">
    <location>
        <begin position="191"/>
        <end position="199"/>
    </location>
</feature>
<feature type="strand" evidence="32">
    <location>
        <begin position="202"/>
        <end position="210"/>
    </location>
</feature>
<feature type="helix" evidence="32">
    <location>
        <begin position="215"/>
        <end position="229"/>
    </location>
</feature>
<feature type="helix" evidence="32">
    <location>
        <begin position="233"/>
        <end position="235"/>
    </location>
</feature>
<feature type="strand" evidence="32">
    <location>
        <begin position="238"/>
        <end position="241"/>
    </location>
</feature>
<feature type="helix" evidence="32">
    <location>
        <begin position="242"/>
        <end position="244"/>
    </location>
</feature>
<feature type="strand" evidence="34">
    <location>
        <begin position="256"/>
        <end position="258"/>
    </location>
</feature>
<name>IF4E_DROME</name>
<reference key="1">
    <citation type="journal article" date="1995" name="Biochim. Biophys. Acta">
        <title>Translation initiation factor eIF-4E from Drosophila: cDNA sequence and expression of the gene.</title>
        <authorList>
            <person name="Hernandez G."/>
            <person name="Sierra J.M."/>
        </authorList>
    </citation>
    <scope>NUCLEOTIDE SEQUENCE [MRNA] (ISOFORM I)</scope>
    <scope>DEVELOPMENTAL STAGE</scope>
</reference>
<reference key="2">
    <citation type="journal article" date="1996" name="J. Biol. Chem.">
        <title>Alternatively spliced transcripts from the Drosophila eIF4E gene produce two different Cap-binding proteins.</title>
        <authorList>
            <person name="Lavoie C.A."/>
            <person name="Lachance P.E.D."/>
            <person name="Sonenberg N."/>
            <person name="Lasko P."/>
        </authorList>
    </citation>
    <scope>NUCLEOTIDE SEQUENCE [GENOMIC DNA] (ISOFORMS I AND II)</scope>
    <scope>FUNCTION</scope>
</reference>
<reference key="3">
    <citation type="journal article" date="1997" name="Mol. Gen. Genet.">
        <title>Localization, structure and expression of the gene for translation initiation factor eIF-4E from Drosophila melanogaster.</title>
        <authorList>
            <person name="Hernandez G."/>
            <person name="del Corral R."/>
            <person name="Santoyo J."/>
            <person name="Campuzano S."/>
            <person name="Sierra J.M."/>
        </authorList>
    </citation>
    <scope>NUCLEOTIDE SEQUENCE [GENOMIC DNA] (ISOFORMS I AND II)</scope>
    <scope>TISSUE SPECIFICITY</scope>
    <scope>DEVELOPMENTAL STAGE</scope>
    <source>
        <strain>Canton-S</strain>
    </source>
</reference>
<reference key="4">
    <citation type="journal article" date="2000" name="Science">
        <title>The genome sequence of Drosophila melanogaster.</title>
        <authorList>
            <person name="Adams M.D."/>
            <person name="Celniker S.E."/>
            <person name="Holt R.A."/>
            <person name="Evans C.A."/>
            <person name="Gocayne J.D."/>
            <person name="Amanatides P.G."/>
            <person name="Scherer S.E."/>
            <person name="Li P.W."/>
            <person name="Hoskins R.A."/>
            <person name="Galle R.F."/>
            <person name="George R.A."/>
            <person name="Lewis S.E."/>
            <person name="Richards S."/>
            <person name="Ashburner M."/>
            <person name="Henderson S.N."/>
            <person name="Sutton G.G."/>
            <person name="Wortman J.R."/>
            <person name="Yandell M.D."/>
            <person name="Zhang Q."/>
            <person name="Chen L.X."/>
            <person name="Brandon R.C."/>
            <person name="Rogers Y.-H.C."/>
            <person name="Blazej R.G."/>
            <person name="Champe M."/>
            <person name="Pfeiffer B.D."/>
            <person name="Wan K.H."/>
            <person name="Doyle C."/>
            <person name="Baxter E.G."/>
            <person name="Helt G."/>
            <person name="Nelson C.R."/>
            <person name="Miklos G.L.G."/>
            <person name="Abril J.F."/>
            <person name="Agbayani A."/>
            <person name="An H.-J."/>
            <person name="Andrews-Pfannkoch C."/>
            <person name="Baldwin D."/>
            <person name="Ballew R.M."/>
            <person name="Basu A."/>
            <person name="Baxendale J."/>
            <person name="Bayraktaroglu L."/>
            <person name="Beasley E.M."/>
            <person name="Beeson K.Y."/>
            <person name="Benos P.V."/>
            <person name="Berman B.P."/>
            <person name="Bhandari D."/>
            <person name="Bolshakov S."/>
            <person name="Borkova D."/>
            <person name="Botchan M.R."/>
            <person name="Bouck J."/>
            <person name="Brokstein P."/>
            <person name="Brottier P."/>
            <person name="Burtis K.C."/>
            <person name="Busam D.A."/>
            <person name="Butler H."/>
            <person name="Cadieu E."/>
            <person name="Center A."/>
            <person name="Chandra I."/>
            <person name="Cherry J.M."/>
            <person name="Cawley S."/>
            <person name="Dahlke C."/>
            <person name="Davenport L.B."/>
            <person name="Davies P."/>
            <person name="de Pablos B."/>
            <person name="Delcher A."/>
            <person name="Deng Z."/>
            <person name="Mays A.D."/>
            <person name="Dew I."/>
            <person name="Dietz S.M."/>
            <person name="Dodson K."/>
            <person name="Doup L.E."/>
            <person name="Downes M."/>
            <person name="Dugan-Rocha S."/>
            <person name="Dunkov B.C."/>
            <person name="Dunn P."/>
            <person name="Durbin K.J."/>
            <person name="Evangelista C.C."/>
            <person name="Ferraz C."/>
            <person name="Ferriera S."/>
            <person name="Fleischmann W."/>
            <person name="Fosler C."/>
            <person name="Gabrielian A.E."/>
            <person name="Garg N.S."/>
            <person name="Gelbart W.M."/>
            <person name="Glasser K."/>
            <person name="Glodek A."/>
            <person name="Gong F."/>
            <person name="Gorrell J.H."/>
            <person name="Gu Z."/>
            <person name="Guan P."/>
            <person name="Harris M."/>
            <person name="Harris N.L."/>
            <person name="Harvey D.A."/>
            <person name="Heiman T.J."/>
            <person name="Hernandez J.R."/>
            <person name="Houck J."/>
            <person name="Hostin D."/>
            <person name="Houston K.A."/>
            <person name="Howland T.J."/>
            <person name="Wei M.-H."/>
            <person name="Ibegwam C."/>
            <person name="Jalali M."/>
            <person name="Kalush F."/>
            <person name="Karpen G.H."/>
            <person name="Ke Z."/>
            <person name="Kennison J.A."/>
            <person name="Ketchum K.A."/>
            <person name="Kimmel B.E."/>
            <person name="Kodira C.D."/>
            <person name="Kraft C.L."/>
            <person name="Kravitz S."/>
            <person name="Kulp D."/>
            <person name="Lai Z."/>
            <person name="Lasko P."/>
            <person name="Lei Y."/>
            <person name="Levitsky A.A."/>
            <person name="Li J.H."/>
            <person name="Li Z."/>
            <person name="Liang Y."/>
            <person name="Lin X."/>
            <person name="Liu X."/>
            <person name="Mattei B."/>
            <person name="McIntosh T.C."/>
            <person name="McLeod M.P."/>
            <person name="McPherson D."/>
            <person name="Merkulov G."/>
            <person name="Milshina N.V."/>
            <person name="Mobarry C."/>
            <person name="Morris J."/>
            <person name="Moshrefi A."/>
            <person name="Mount S.M."/>
            <person name="Moy M."/>
            <person name="Murphy B."/>
            <person name="Murphy L."/>
            <person name="Muzny D.M."/>
            <person name="Nelson D.L."/>
            <person name="Nelson D.R."/>
            <person name="Nelson K.A."/>
            <person name="Nixon K."/>
            <person name="Nusskern D.R."/>
            <person name="Pacleb J.M."/>
            <person name="Palazzolo M."/>
            <person name="Pittman G.S."/>
            <person name="Pan S."/>
            <person name="Pollard J."/>
            <person name="Puri V."/>
            <person name="Reese M.G."/>
            <person name="Reinert K."/>
            <person name="Remington K."/>
            <person name="Saunders R.D.C."/>
            <person name="Scheeler F."/>
            <person name="Shen H."/>
            <person name="Shue B.C."/>
            <person name="Siden-Kiamos I."/>
            <person name="Simpson M."/>
            <person name="Skupski M.P."/>
            <person name="Smith T.J."/>
            <person name="Spier E."/>
            <person name="Spradling A.C."/>
            <person name="Stapleton M."/>
            <person name="Strong R."/>
            <person name="Sun E."/>
            <person name="Svirskas R."/>
            <person name="Tector C."/>
            <person name="Turner R."/>
            <person name="Venter E."/>
            <person name="Wang A.H."/>
            <person name="Wang X."/>
            <person name="Wang Z.-Y."/>
            <person name="Wassarman D.A."/>
            <person name="Weinstock G.M."/>
            <person name="Weissenbach J."/>
            <person name="Williams S.M."/>
            <person name="Woodage T."/>
            <person name="Worley K.C."/>
            <person name="Wu D."/>
            <person name="Yang S."/>
            <person name="Yao Q.A."/>
            <person name="Ye J."/>
            <person name="Yeh R.-F."/>
            <person name="Zaveri J.S."/>
            <person name="Zhan M."/>
            <person name="Zhang G."/>
            <person name="Zhao Q."/>
            <person name="Zheng L."/>
            <person name="Zheng X.H."/>
            <person name="Zhong F.N."/>
            <person name="Zhong W."/>
            <person name="Zhou X."/>
            <person name="Zhu S.C."/>
            <person name="Zhu X."/>
            <person name="Smith H.O."/>
            <person name="Gibbs R.A."/>
            <person name="Myers E.W."/>
            <person name="Rubin G.M."/>
            <person name="Venter J.C."/>
        </authorList>
    </citation>
    <scope>NUCLEOTIDE SEQUENCE [LARGE SCALE GENOMIC DNA]</scope>
    <source>
        <strain>Berkeley</strain>
    </source>
</reference>
<reference key="5">
    <citation type="journal article" date="2002" name="Genome Biol.">
        <title>Annotation of the Drosophila melanogaster euchromatic genome: a systematic review.</title>
        <authorList>
            <person name="Misra S."/>
            <person name="Crosby M.A."/>
            <person name="Mungall C.J."/>
            <person name="Matthews B.B."/>
            <person name="Campbell K.S."/>
            <person name="Hradecky P."/>
            <person name="Huang Y."/>
            <person name="Kaminker J.S."/>
            <person name="Millburn G.H."/>
            <person name="Prochnik S.E."/>
            <person name="Smith C.D."/>
            <person name="Tupy J.L."/>
            <person name="Whitfield E.J."/>
            <person name="Bayraktaroglu L."/>
            <person name="Berman B.P."/>
            <person name="Bettencourt B.R."/>
            <person name="Celniker S.E."/>
            <person name="de Grey A.D.N.J."/>
            <person name="Drysdale R.A."/>
            <person name="Harris N.L."/>
            <person name="Richter J."/>
            <person name="Russo S."/>
            <person name="Schroeder A.J."/>
            <person name="Shu S.Q."/>
            <person name="Stapleton M."/>
            <person name="Yamada C."/>
            <person name="Ashburner M."/>
            <person name="Gelbart W.M."/>
            <person name="Rubin G.M."/>
            <person name="Lewis S.E."/>
        </authorList>
    </citation>
    <scope>GENOME REANNOTATION</scope>
    <scope>ALTERNATIVE SPLICING</scope>
    <source>
        <strain>Berkeley</strain>
    </source>
</reference>
<reference key="6">
    <citation type="journal article" date="2002" name="Genome Biol.">
        <title>A Drosophila full-length cDNA resource.</title>
        <authorList>
            <person name="Stapleton M."/>
            <person name="Carlson J.W."/>
            <person name="Brokstein P."/>
            <person name="Yu C."/>
            <person name="Champe M."/>
            <person name="George R.A."/>
            <person name="Guarin H."/>
            <person name="Kronmiller B."/>
            <person name="Pacleb J.M."/>
            <person name="Park S."/>
            <person name="Wan K.H."/>
            <person name="Rubin G.M."/>
            <person name="Celniker S.E."/>
        </authorList>
    </citation>
    <scope>NUCLEOTIDE SEQUENCE [LARGE SCALE MRNA] (ISOFORM I)</scope>
    <source>
        <strain>Berkeley</strain>
        <tissue>Embryo</tissue>
    </source>
</reference>
<reference key="7">
    <citation type="submission" date="2008-09" db="EMBL/GenBank/DDBJ databases">
        <authorList>
            <person name="Stapleton M."/>
            <person name="Carlson J.W."/>
            <person name="Booth B."/>
            <person name="Chavez C."/>
            <person name="Frise E."/>
            <person name="George R.A."/>
            <person name="Pacleb J.M."/>
            <person name="Park S."/>
            <person name="Wan K.H."/>
            <person name="Yu C."/>
            <person name="Rubin G.M."/>
            <person name="Celniker S.E."/>
        </authorList>
    </citation>
    <scope>NUCLEOTIDE SEQUENCE [LARGE SCALE MRNA] (ISOFORMS I AND II)</scope>
    <source>
        <strain>Berkeley</strain>
        <tissue>Embryo</tissue>
    </source>
</reference>
<reference key="8">
    <citation type="journal article" date="2001" name="EMBO J.">
        <title>PML RING suppresses oncogenic transformation by reducing the affinity of eIF4E for mRNA.</title>
        <authorList>
            <person name="Cohen N."/>
            <person name="Sharma M."/>
            <person name="Kentsis A."/>
            <person name="Perez J.M."/>
            <person name="Strudwick S."/>
            <person name="Borden K.L."/>
        </authorList>
    </citation>
    <scope>SUBCELLULAR LOCATION</scope>
</reference>
<reference key="9">
    <citation type="journal article" date="2001" name="Nat. Cell Biol.">
        <title>The translational inhibitor 4E-BP is an effector of PI(3)K/Akt signalling and cell growth in Drosophila.</title>
        <authorList>
            <person name="Miron M."/>
            <person name="Verdu J."/>
            <person name="Lachance P.E."/>
            <person name="Birnbaum M.J."/>
            <person name="Lasko P.F."/>
            <person name="Sonenberg N."/>
        </authorList>
    </citation>
    <scope>INTERACTION WITH THOR</scope>
</reference>
<reference key="10">
    <citation type="journal article" date="2003" name="J. Cell Biol.">
        <title>Cup is an eIF4E binding protein required for both the translational repression of oskar and the recruitment of Barentsz.</title>
        <authorList>
            <person name="Wilhelm J.E."/>
            <person name="Hilton M."/>
            <person name="Amos Q."/>
            <person name="Henzel W.J."/>
        </authorList>
    </citation>
    <scope>INTERACTION WITH CUP</scope>
</reference>
<reference key="11">
    <citation type="journal article" date="2003" name="Mol. Cell. Biol.">
        <title>Signaling from Akt to FRAP/TOR targets both 4E-BP and S6K in Drosophila melanogaster.</title>
        <authorList>
            <person name="Miron M."/>
            <person name="Lasko P."/>
            <person name="Sonenberg N."/>
        </authorList>
    </citation>
    <scope>INTERACTION WITH THOR</scope>
</reference>
<reference key="12">
    <citation type="journal article" date="2004" name="Dev. Cell">
        <title>Drosophila Cup is an eIF4E binding protein that associates with Bruno and regulates oskar mRNA translation in oogenesis.</title>
        <authorList>
            <person name="Nakamura A."/>
            <person name="Sato K."/>
            <person name="Hanyu-Nakamura K."/>
        </authorList>
    </citation>
    <scope>INTERACTION WITH CUP</scope>
    <scope>MUTAGENESIS OF TRP-117</scope>
</reference>
<reference key="13">
    <citation type="journal article" date="2004" name="EMBO J.">
        <title>Drosophila Cup is an eIF4E-binding protein that functions in Smaug-mediated translational repression.</title>
        <authorList>
            <person name="Nelson M.R."/>
            <person name="Leidal A.M."/>
            <person name="Smibert C.A."/>
        </authorList>
    </citation>
    <scope>INTERACTION WITH CUP</scope>
</reference>
<reference key="14">
    <citation type="journal article" date="2006" name="Neuron">
        <title>Staufen- and FMRP-containing neuronal RNPs are structurally and functionally related to somatic P bodies.</title>
        <authorList>
            <person name="Barbee S.A."/>
            <person name="Estes P.S."/>
            <person name="Cziko A.M."/>
            <person name="Hillebrand J."/>
            <person name="Luedeman R.A."/>
            <person name="Coller J.M."/>
            <person name="Johnson N."/>
            <person name="Howlett I.C."/>
            <person name="Geng C."/>
            <person name="Ueda R."/>
            <person name="Brand A.H."/>
            <person name="Newbury S.F."/>
            <person name="Wilhelm J.E."/>
            <person name="Levine R.B."/>
            <person name="Nakamura A."/>
            <person name="Parker R."/>
            <person name="Ramaswami M."/>
        </authorList>
    </citation>
    <scope>SUBCELLULAR LOCATION</scope>
</reference>
<reference key="15">
    <citation type="journal article" date="2011" name="Gene">
        <title>Diminution of eIF4E activity suppresses parkin mutant phenotypes.</title>
        <authorList>
            <person name="Ottone C."/>
            <person name="Galasso A."/>
            <person name="Gemei M."/>
            <person name="Pisa V."/>
            <person name="Gigliotti S."/>
            <person name="Piccioni F."/>
            <person name="Graziani F."/>
            <person name="Verrotti di Pianella A."/>
        </authorList>
    </citation>
    <scope>TISSUE SPECIFICITY</scope>
</reference>
<reference key="16">
    <citation type="journal article" date="2013" name="Mol. Cell. Biol.">
        <title>Mextli is a novel eukaryotic translation initiation factor 4E-binding protein that promotes translation in Drosophila melanogaster.</title>
        <authorList>
            <person name="Hernandez G."/>
            <person name="Miron M."/>
            <person name="Han H."/>
            <person name="Liu N."/>
            <person name="Magescas J."/>
            <person name="Tettweiler G."/>
            <person name="Frank F."/>
            <person name="Siddiqui N."/>
            <person name="Sonenberg N."/>
            <person name="Lasko P."/>
        </authorList>
    </citation>
    <scope>INTERACTION WITH MXT</scope>
</reference>
<reference key="17">
    <citation type="journal article" date="2017" name="Elife">
        <title>ME31B globally represses maternal mRNAs by two distinct mechanisms during the Drosophila maternal-to-zygotic transition.</title>
        <authorList>
            <person name="Wang M."/>
            <person name="Ly M."/>
            <person name="Lugowski A."/>
            <person name="Laver J.D."/>
            <person name="Lipshitz H.D."/>
            <person name="Smibert C.A."/>
            <person name="Rissland O.S."/>
        </authorList>
    </citation>
    <scope>FUNCTION</scope>
    <scope>IDENTIFICATION IN A COMPLEX WITH ME31B; CUP; TRAL AND PABP</scope>
    <scope>DEVELOPMENTAL STAGE</scope>
</reference>
<reference evidence="26" key="18">
    <citation type="journal article" date="2012" name="RNA">
        <title>Crystal structure of a minimal eIF4E-Cup complex reveals a general mechanism of eIF4E regulation in translational repression.</title>
        <authorList>
            <person name="Kinkelin K."/>
            <person name="Veith K."/>
            <person name="Grunwald M."/>
            <person name="Bono F."/>
        </authorList>
    </citation>
    <scope>X-RAY CRYSTALLOGRAPHY (2.80 ANGSTROMS) OF 19-259 IN COMPLEX WITH CUP</scope>
    <scope>INTERACTION WITH CUP</scope>
</reference>
<reference key="19">
    <citation type="journal article" date="2015" name="Genes Dev.">
        <title>Mextli proteins use both canonical bipartite and novel tripartite binding modes to form eIF4E complexes that display differential sensitivity to 4E-BP regulation.</title>
        <authorList>
            <person name="Peter D."/>
            <person name="Weber R."/>
            <person name="Kone C."/>
            <person name="Chung M.Y."/>
            <person name="Ebertsch L."/>
            <person name="Truffault V."/>
            <person name="Weichenrieder O."/>
            <person name="Igreja C."/>
            <person name="Izaurralde E."/>
        </authorList>
    </citation>
    <scope>X-RAY CRYSTALLOGRAPHY (2.13 ANGSTROMS) OF 80-259 IN COMPLEX WITH MXT</scope>
    <scope>INTERACTION WITH 4E-T; CUP; MXT AND THOR</scope>
    <scope>MUTAGENESIS OF ILE-107; 121-ASN-HIS-122 AND ILE-123</scope>
</reference>
<reference evidence="27 28 29 30 31" key="20">
    <citation type="journal article" date="2015" name="Mol. Cell">
        <title>Molecular architecture of 4E-BP translational inhibitors bound to eIF4E.</title>
        <authorList>
            <person name="Peter D."/>
            <person name="Igreja C."/>
            <person name="Weber R."/>
            <person name="Wohlbold L."/>
            <person name="Weiler C."/>
            <person name="Ebertsch L."/>
            <person name="Weichenrieder O."/>
            <person name="Izaurralde E."/>
        </authorList>
    </citation>
    <scope>X-RAY CRYSTALLOGRAPHY (1.10 ANGSTROMS) OF 80-259 IN COMPLEX WITH EIF4G1; 4E-T AND THOR</scope>
    <scope>INTERACTION WITH EIF4G1; 4E-T AND THOR</scope>
</reference>